<gene>
    <name type="primary">EMC4</name>
    <name type="synonym">TMEM85</name>
    <name type="ORF">HSPC184</name>
    <name type="ORF">PIG17</name>
</gene>
<protein>
    <recommendedName>
        <fullName>ER membrane protein complex subunit 4</fullName>
    </recommendedName>
    <alternativeName>
        <fullName>Cell proliferation-inducing gene 17 protein</fullName>
    </alternativeName>
    <alternativeName>
        <fullName>Transmembrane protein 85</fullName>
    </alternativeName>
</protein>
<accession>Q5J8M3</accession>
<accession>A8K3A9</accession>
<accession>B4DJQ4</accession>
<accession>Q96KX9</accession>
<accession>Q9BUI5</accession>
<accession>Q9P0T9</accession>
<proteinExistence type="evidence at protein level"/>
<dbReference type="EMBL" id="AY336092">
    <property type="protein sequence ID" value="AAR24622.1"/>
    <property type="molecule type" value="mRNA"/>
</dbReference>
<dbReference type="EMBL" id="AF151018">
    <property type="protein sequence ID" value="AAF36104.1"/>
    <property type="molecule type" value="mRNA"/>
</dbReference>
<dbReference type="EMBL" id="AK075227">
    <property type="protein sequence ID" value="BAC11486.1"/>
    <property type="molecule type" value="mRNA"/>
</dbReference>
<dbReference type="EMBL" id="AK290524">
    <property type="protein sequence ID" value="BAF83213.1"/>
    <property type="molecule type" value="mRNA"/>
</dbReference>
<dbReference type="EMBL" id="AK296184">
    <property type="protein sequence ID" value="BAG58916.1"/>
    <property type="molecule type" value="mRNA"/>
</dbReference>
<dbReference type="EMBL" id="AC079203">
    <property type="status" value="NOT_ANNOTATED_CDS"/>
    <property type="molecule type" value="Genomic_DNA"/>
</dbReference>
<dbReference type="EMBL" id="CH471125">
    <property type="protein sequence ID" value="EAW92292.1"/>
    <property type="molecule type" value="Genomic_DNA"/>
</dbReference>
<dbReference type="EMBL" id="BC002583">
    <property type="protein sequence ID" value="AAH02583.1"/>
    <property type="molecule type" value="mRNA"/>
</dbReference>
<dbReference type="CCDS" id="CCDS10035.1">
    <molecule id="Q5J8M3-1"/>
</dbReference>
<dbReference type="CCDS" id="CCDS66732.1">
    <molecule id="Q5J8M3-2"/>
</dbReference>
<dbReference type="RefSeq" id="NP_001273349.1">
    <molecule id="Q5J8M3-2"/>
    <property type="nucleotide sequence ID" value="NM_001286420.2"/>
</dbReference>
<dbReference type="RefSeq" id="NP_057538.1">
    <molecule id="Q5J8M3-1"/>
    <property type="nucleotide sequence ID" value="NM_016454.4"/>
</dbReference>
<dbReference type="PDB" id="6Z3W">
    <property type="method" value="EM"/>
    <property type="resolution" value="6.40 A"/>
    <property type="chains" value="D=1-183"/>
</dbReference>
<dbReference type="PDB" id="7ADO">
    <property type="method" value="EM"/>
    <property type="resolution" value="3.39 A"/>
    <property type="chains" value="D=1-183"/>
</dbReference>
<dbReference type="PDB" id="7ADP">
    <property type="method" value="EM"/>
    <property type="resolution" value="3.60 A"/>
    <property type="chains" value="D=1-183"/>
</dbReference>
<dbReference type="PDB" id="8EOI">
    <property type="method" value="EM"/>
    <property type="resolution" value="3.40 A"/>
    <property type="chains" value="D=14-183"/>
</dbReference>
<dbReference type="PDB" id="8J0N">
    <property type="method" value="EM"/>
    <property type="resolution" value="3.47 A"/>
    <property type="chains" value="D=1-183"/>
</dbReference>
<dbReference type="PDB" id="8J0O">
    <property type="method" value="EM"/>
    <property type="resolution" value="3.32 A"/>
    <property type="chains" value="D=1-183"/>
</dbReference>
<dbReference type="PDB" id="8S9S">
    <property type="method" value="EM"/>
    <property type="resolution" value="3.60 A"/>
    <property type="chains" value="4=1-183"/>
</dbReference>
<dbReference type="PDB" id="9C7V">
    <property type="method" value="EM"/>
    <property type="resolution" value="6.60 A"/>
    <property type="chains" value="4=1-183"/>
</dbReference>
<dbReference type="PDBsum" id="6Z3W"/>
<dbReference type="PDBsum" id="7ADO"/>
<dbReference type="PDBsum" id="7ADP"/>
<dbReference type="PDBsum" id="8EOI"/>
<dbReference type="PDBsum" id="8J0N"/>
<dbReference type="PDBsum" id="8J0O"/>
<dbReference type="PDBsum" id="8S9S"/>
<dbReference type="PDBsum" id="9C7V"/>
<dbReference type="EMDB" id="EMD-11732"/>
<dbReference type="EMDB" id="EMD-11733"/>
<dbReference type="EMDB" id="EMD-28376"/>
<dbReference type="EMDB" id="EMD-35906"/>
<dbReference type="EMDB" id="EMD-35907"/>
<dbReference type="EMDB" id="EMD-40245"/>
<dbReference type="EMDB" id="EMD-40246"/>
<dbReference type="EMDB" id="EMD-45295"/>
<dbReference type="SMR" id="Q5J8M3"/>
<dbReference type="BioGRID" id="119397">
    <property type="interactions" value="301"/>
</dbReference>
<dbReference type="ComplexPortal" id="CPX-5848">
    <property type="entry name" value="Endoplasmic reticulum membrane complex, EMC8 variant"/>
</dbReference>
<dbReference type="ComplexPortal" id="CPX-5881">
    <property type="entry name" value="Endoplasmic reticulum membrane complex, EMC9 variant"/>
</dbReference>
<dbReference type="CORUM" id="Q5J8M3"/>
<dbReference type="FunCoup" id="Q5J8M3">
    <property type="interactions" value="2284"/>
</dbReference>
<dbReference type="IntAct" id="Q5J8M3">
    <property type="interactions" value="99"/>
</dbReference>
<dbReference type="MINT" id="Q5J8M3"/>
<dbReference type="STRING" id="9606.ENSP00000267750"/>
<dbReference type="TCDB" id="3.A.27.1.1">
    <property type="family name" value="the endoplasmic reticulum membrane protein insertion complex (emc) family"/>
</dbReference>
<dbReference type="iPTMnet" id="Q5J8M3"/>
<dbReference type="PhosphoSitePlus" id="Q5J8M3"/>
<dbReference type="SwissPalm" id="Q5J8M3"/>
<dbReference type="BioMuta" id="EMC4"/>
<dbReference type="DMDM" id="115502869"/>
<dbReference type="jPOST" id="Q5J8M3"/>
<dbReference type="MassIVE" id="Q5J8M3"/>
<dbReference type="PaxDb" id="9606-ENSP00000267750"/>
<dbReference type="PeptideAtlas" id="Q5J8M3"/>
<dbReference type="ProteomicsDB" id="62980">
    <molecule id="Q5J8M3-1"/>
</dbReference>
<dbReference type="ProteomicsDB" id="62981">
    <molecule id="Q5J8M3-2"/>
</dbReference>
<dbReference type="ProteomicsDB" id="62982">
    <molecule id="Q5J8M3-3"/>
</dbReference>
<dbReference type="Pumba" id="Q5J8M3"/>
<dbReference type="TopDownProteomics" id="Q5J8M3-1">
    <molecule id="Q5J8M3-1"/>
</dbReference>
<dbReference type="TopDownProteomics" id="Q5J8M3-2">
    <molecule id="Q5J8M3-2"/>
</dbReference>
<dbReference type="Antibodypedia" id="65253">
    <property type="antibodies" value="73 antibodies from 20 providers"/>
</dbReference>
<dbReference type="DNASU" id="51234"/>
<dbReference type="Ensembl" id="ENST00000249209.8">
    <molecule id="Q5J8M3-2"/>
    <property type="protein sequence ID" value="ENSP00000249209.4"/>
    <property type="gene ID" value="ENSG00000128463.13"/>
</dbReference>
<dbReference type="Ensembl" id="ENST00000267750.9">
    <molecule id="Q5J8M3-1"/>
    <property type="protein sequence ID" value="ENSP00000267750.4"/>
    <property type="gene ID" value="ENSG00000128463.13"/>
</dbReference>
<dbReference type="GeneID" id="51234"/>
<dbReference type="KEGG" id="hsa:51234"/>
<dbReference type="MANE-Select" id="ENST00000267750.9">
    <property type="protein sequence ID" value="ENSP00000267750.4"/>
    <property type="RefSeq nucleotide sequence ID" value="NM_016454.4"/>
    <property type="RefSeq protein sequence ID" value="NP_057538.1"/>
</dbReference>
<dbReference type="UCSC" id="uc001zhq.5">
    <molecule id="Q5J8M3-1"/>
    <property type="organism name" value="human"/>
</dbReference>
<dbReference type="AGR" id="HGNC:28032"/>
<dbReference type="CTD" id="51234"/>
<dbReference type="DisGeNET" id="51234"/>
<dbReference type="GeneCards" id="EMC4"/>
<dbReference type="HGNC" id="HGNC:28032">
    <property type="gene designation" value="EMC4"/>
</dbReference>
<dbReference type="HPA" id="ENSG00000128463">
    <property type="expression patterns" value="Low tissue specificity"/>
</dbReference>
<dbReference type="MIM" id="616245">
    <property type="type" value="gene"/>
</dbReference>
<dbReference type="neXtProt" id="NX_Q5J8M3"/>
<dbReference type="OpenTargets" id="ENSG00000128463"/>
<dbReference type="PharmGKB" id="PA143485634"/>
<dbReference type="VEuPathDB" id="HostDB:ENSG00000128463"/>
<dbReference type="eggNOG" id="KOG3318">
    <property type="taxonomic scope" value="Eukaryota"/>
</dbReference>
<dbReference type="GeneTree" id="ENSGT00390000006970"/>
<dbReference type="HOGENOM" id="CLU_098404_0_1_1"/>
<dbReference type="InParanoid" id="Q5J8M3"/>
<dbReference type="OMA" id="FMMWMVG"/>
<dbReference type="OrthoDB" id="369569at2759"/>
<dbReference type="PAN-GO" id="Q5J8M3">
    <property type="GO annotations" value="1 GO annotation based on evolutionary models"/>
</dbReference>
<dbReference type="PhylomeDB" id="Q5J8M3"/>
<dbReference type="TreeFam" id="TF313750"/>
<dbReference type="PathwayCommons" id="Q5J8M3"/>
<dbReference type="SignaLink" id="Q5J8M3"/>
<dbReference type="BioGRID-ORCS" id="51234">
    <property type="hits" value="310 hits in 1162 CRISPR screens"/>
</dbReference>
<dbReference type="CD-CODE" id="FB4E32DD">
    <property type="entry name" value="Presynaptic clusters and postsynaptic densities"/>
</dbReference>
<dbReference type="ChiTaRS" id="EMC4">
    <property type="organism name" value="human"/>
</dbReference>
<dbReference type="GenomeRNAi" id="51234"/>
<dbReference type="Pharos" id="Q5J8M3">
    <property type="development level" value="Tbio"/>
</dbReference>
<dbReference type="PRO" id="PR:Q5J8M3"/>
<dbReference type="Proteomes" id="UP000005640">
    <property type="component" value="Chromosome 15"/>
</dbReference>
<dbReference type="RNAct" id="Q5J8M3">
    <property type="molecule type" value="protein"/>
</dbReference>
<dbReference type="Bgee" id="ENSG00000128463">
    <property type="expression patterns" value="Expressed in left ventricle myocardium and 186 other cell types or tissues"/>
</dbReference>
<dbReference type="ExpressionAtlas" id="Q5J8M3">
    <property type="expression patterns" value="baseline and differential"/>
</dbReference>
<dbReference type="GO" id="GO:0072546">
    <property type="term" value="C:EMC complex"/>
    <property type="evidence" value="ECO:0000314"/>
    <property type="project" value="UniProtKB"/>
</dbReference>
<dbReference type="GO" id="GO:0005789">
    <property type="term" value="C:endoplasmic reticulum membrane"/>
    <property type="evidence" value="ECO:0000314"/>
    <property type="project" value="UniProtKB"/>
</dbReference>
<dbReference type="GO" id="GO:0016020">
    <property type="term" value="C:membrane"/>
    <property type="evidence" value="ECO:0000314"/>
    <property type="project" value="UniProtKB"/>
</dbReference>
<dbReference type="GO" id="GO:0006915">
    <property type="term" value="P:apoptotic process"/>
    <property type="evidence" value="ECO:0007669"/>
    <property type="project" value="UniProtKB-KW"/>
</dbReference>
<dbReference type="GO" id="GO:0045050">
    <property type="term" value="P:protein insertion into ER membrane by stop-transfer membrane-anchor sequence"/>
    <property type="evidence" value="ECO:0000314"/>
    <property type="project" value="ComplexPortal"/>
</dbReference>
<dbReference type="GO" id="GO:0071816">
    <property type="term" value="P:tail-anchored membrane protein insertion into ER membrane"/>
    <property type="evidence" value="ECO:0000314"/>
    <property type="project" value="UniProtKB"/>
</dbReference>
<dbReference type="InterPro" id="IPR009445">
    <property type="entry name" value="TMEM85/Emc4"/>
</dbReference>
<dbReference type="PANTHER" id="PTHR19315">
    <property type="entry name" value="ER MEMBRANE PROTEIN COMPLEX SUBUNIT 4"/>
    <property type="match status" value="1"/>
</dbReference>
<dbReference type="Pfam" id="PF06417">
    <property type="entry name" value="EMC4"/>
    <property type="match status" value="1"/>
</dbReference>
<dbReference type="PIRSF" id="PIRSF017207">
    <property type="entry name" value="UCP017207_TM-p85"/>
    <property type="match status" value="1"/>
</dbReference>
<sequence length="183" mass="20087">MTAQGGLVANRGRRFKWAIELSGPGGGSRGRSDRGSGQGDSLYPVGYLDKQVPDTSVQETDRILVEKRCWDIALGPLKQIPMNLFIMYMAGNTISIFPTMMVCMMAWRPIQALMAISATFKMLESSSQKFLQGLVYLIGNLMGLALAVYKCQSMGLLPTHASDWLAFIEPPERMEFSGGGLLL</sequence>
<reference key="1">
    <citation type="submission" date="2003-07" db="EMBL/GenBank/DDBJ databases">
        <title>Identification of a proliferation-inducing gene.</title>
        <authorList>
            <person name="Kim J.W."/>
        </authorList>
    </citation>
    <scope>NUCLEOTIDE SEQUENCE [LARGE SCALE MRNA] (ISOFORM 1)</scope>
</reference>
<reference key="2">
    <citation type="journal article" date="2000" name="Genome Res.">
        <title>Cloning and functional analysis of cDNAs with open reading frames for 300 previously undefined genes expressed in CD34+ hematopoietic stem/progenitor cells.</title>
        <authorList>
            <person name="Zhang Q.-H."/>
            <person name="Ye M."/>
            <person name="Wu X.-Y."/>
            <person name="Ren S.-X."/>
            <person name="Zhao M."/>
            <person name="Zhao C.-J."/>
            <person name="Fu G."/>
            <person name="Shen Y."/>
            <person name="Fan H.-Y."/>
            <person name="Lu G."/>
            <person name="Zhong M."/>
            <person name="Xu X.-R."/>
            <person name="Han Z.-G."/>
            <person name="Zhang J.-W."/>
            <person name="Tao J."/>
            <person name="Huang Q.-H."/>
            <person name="Zhou J."/>
            <person name="Hu G.-X."/>
            <person name="Gu J."/>
            <person name="Chen S.-J."/>
            <person name="Chen Z."/>
        </authorList>
    </citation>
    <scope>NUCLEOTIDE SEQUENCE [LARGE SCALE MRNA] (ISOFORM 1)</scope>
    <source>
        <tissue>Umbilical cord blood</tissue>
    </source>
</reference>
<reference key="3">
    <citation type="journal article" date="2004" name="Nat. Genet.">
        <title>Complete sequencing and characterization of 21,243 full-length human cDNAs.</title>
        <authorList>
            <person name="Ota T."/>
            <person name="Suzuki Y."/>
            <person name="Nishikawa T."/>
            <person name="Otsuki T."/>
            <person name="Sugiyama T."/>
            <person name="Irie R."/>
            <person name="Wakamatsu A."/>
            <person name="Hayashi K."/>
            <person name="Sato H."/>
            <person name="Nagai K."/>
            <person name="Kimura K."/>
            <person name="Makita H."/>
            <person name="Sekine M."/>
            <person name="Obayashi M."/>
            <person name="Nishi T."/>
            <person name="Shibahara T."/>
            <person name="Tanaka T."/>
            <person name="Ishii S."/>
            <person name="Yamamoto J."/>
            <person name="Saito K."/>
            <person name="Kawai Y."/>
            <person name="Isono Y."/>
            <person name="Nakamura Y."/>
            <person name="Nagahari K."/>
            <person name="Murakami K."/>
            <person name="Yasuda T."/>
            <person name="Iwayanagi T."/>
            <person name="Wagatsuma M."/>
            <person name="Shiratori A."/>
            <person name="Sudo H."/>
            <person name="Hosoiri T."/>
            <person name="Kaku Y."/>
            <person name="Kodaira H."/>
            <person name="Kondo H."/>
            <person name="Sugawara M."/>
            <person name="Takahashi M."/>
            <person name="Kanda K."/>
            <person name="Yokoi T."/>
            <person name="Furuya T."/>
            <person name="Kikkawa E."/>
            <person name="Omura Y."/>
            <person name="Abe K."/>
            <person name="Kamihara K."/>
            <person name="Katsuta N."/>
            <person name="Sato K."/>
            <person name="Tanikawa M."/>
            <person name="Yamazaki M."/>
            <person name="Ninomiya K."/>
            <person name="Ishibashi T."/>
            <person name="Yamashita H."/>
            <person name="Murakawa K."/>
            <person name="Fujimori K."/>
            <person name="Tanai H."/>
            <person name="Kimata M."/>
            <person name="Watanabe M."/>
            <person name="Hiraoka S."/>
            <person name="Chiba Y."/>
            <person name="Ishida S."/>
            <person name="Ono Y."/>
            <person name="Takiguchi S."/>
            <person name="Watanabe S."/>
            <person name="Yosida M."/>
            <person name="Hotuta T."/>
            <person name="Kusano J."/>
            <person name="Kanehori K."/>
            <person name="Takahashi-Fujii A."/>
            <person name="Hara H."/>
            <person name="Tanase T.-O."/>
            <person name="Nomura Y."/>
            <person name="Togiya S."/>
            <person name="Komai F."/>
            <person name="Hara R."/>
            <person name="Takeuchi K."/>
            <person name="Arita M."/>
            <person name="Imose N."/>
            <person name="Musashino K."/>
            <person name="Yuuki H."/>
            <person name="Oshima A."/>
            <person name="Sasaki N."/>
            <person name="Aotsuka S."/>
            <person name="Yoshikawa Y."/>
            <person name="Matsunawa H."/>
            <person name="Ichihara T."/>
            <person name="Shiohata N."/>
            <person name="Sano S."/>
            <person name="Moriya S."/>
            <person name="Momiyama H."/>
            <person name="Satoh N."/>
            <person name="Takami S."/>
            <person name="Terashima Y."/>
            <person name="Suzuki O."/>
            <person name="Nakagawa S."/>
            <person name="Senoh A."/>
            <person name="Mizoguchi H."/>
            <person name="Goto Y."/>
            <person name="Shimizu F."/>
            <person name="Wakebe H."/>
            <person name="Hishigaki H."/>
            <person name="Watanabe T."/>
            <person name="Sugiyama A."/>
            <person name="Takemoto M."/>
            <person name="Kawakami B."/>
            <person name="Yamazaki M."/>
            <person name="Watanabe K."/>
            <person name="Kumagai A."/>
            <person name="Itakura S."/>
            <person name="Fukuzumi Y."/>
            <person name="Fujimori Y."/>
            <person name="Komiyama M."/>
            <person name="Tashiro H."/>
            <person name="Tanigami A."/>
            <person name="Fujiwara T."/>
            <person name="Ono T."/>
            <person name="Yamada K."/>
            <person name="Fujii Y."/>
            <person name="Ozaki K."/>
            <person name="Hirao M."/>
            <person name="Ohmori Y."/>
            <person name="Kawabata A."/>
            <person name="Hikiji T."/>
            <person name="Kobatake N."/>
            <person name="Inagaki H."/>
            <person name="Ikema Y."/>
            <person name="Okamoto S."/>
            <person name="Okitani R."/>
            <person name="Kawakami T."/>
            <person name="Noguchi S."/>
            <person name="Itoh T."/>
            <person name="Shigeta K."/>
            <person name="Senba T."/>
            <person name="Matsumura K."/>
            <person name="Nakajima Y."/>
            <person name="Mizuno T."/>
            <person name="Morinaga M."/>
            <person name="Sasaki M."/>
            <person name="Togashi T."/>
            <person name="Oyama M."/>
            <person name="Hata H."/>
            <person name="Watanabe M."/>
            <person name="Komatsu T."/>
            <person name="Mizushima-Sugano J."/>
            <person name="Satoh T."/>
            <person name="Shirai Y."/>
            <person name="Takahashi Y."/>
            <person name="Nakagawa K."/>
            <person name="Okumura K."/>
            <person name="Nagase T."/>
            <person name="Nomura N."/>
            <person name="Kikuchi H."/>
            <person name="Masuho Y."/>
            <person name="Yamashita R."/>
            <person name="Nakai K."/>
            <person name="Yada T."/>
            <person name="Nakamura Y."/>
            <person name="Ohara O."/>
            <person name="Isogai T."/>
            <person name="Sugano S."/>
        </authorList>
    </citation>
    <scope>NUCLEOTIDE SEQUENCE [LARGE SCALE MRNA] (ISOFORMS 1; 2 AND 3)</scope>
    <source>
        <tissue>Brain</tissue>
        <tissue>Placenta</tissue>
        <tissue>Thalamus</tissue>
    </source>
</reference>
<reference key="4">
    <citation type="journal article" date="2006" name="Nature">
        <title>Analysis of the DNA sequence and duplication history of human chromosome 15.</title>
        <authorList>
            <person name="Zody M.C."/>
            <person name="Garber M."/>
            <person name="Sharpe T."/>
            <person name="Young S.K."/>
            <person name="Rowen L."/>
            <person name="O'Neill K."/>
            <person name="Whittaker C.A."/>
            <person name="Kamal M."/>
            <person name="Chang J.L."/>
            <person name="Cuomo C.A."/>
            <person name="Dewar K."/>
            <person name="FitzGerald M.G."/>
            <person name="Kodira C.D."/>
            <person name="Madan A."/>
            <person name="Qin S."/>
            <person name="Yang X."/>
            <person name="Abbasi N."/>
            <person name="Abouelleil A."/>
            <person name="Arachchi H.M."/>
            <person name="Baradarani L."/>
            <person name="Birditt B."/>
            <person name="Bloom S."/>
            <person name="Bloom T."/>
            <person name="Borowsky M.L."/>
            <person name="Burke J."/>
            <person name="Butler J."/>
            <person name="Cook A."/>
            <person name="DeArellano K."/>
            <person name="DeCaprio D."/>
            <person name="Dorris L. III"/>
            <person name="Dors M."/>
            <person name="Eichler E.E."/>
            <person name="Engels R."/>
            <person name="Fahey J."/>
            <person name="Fleetwood P."/>
            <person name="Friedman C."/>
            <person name="Gearin G."/>
            <person name="Hall J.L."/>
            <person name="Hensley G."/>
            <person name="Johnson E."/>
            <person name="Jones C."/>
            <person name="Kamat A."/>
            <person name="Kaur A."/>
            <person name="Locke D.P."/>
            <person name="Madan A."/>
            <person name="Munson G."/>
            <person name="Jaffe D.B."/>
            <person name="Lui A."/>
            <person name="Macdonald P."/>
            <person name="Mauceli E."/>
            <person name="Naylor J.W."/>
            <person name="Nesbitt R."/>
            <person name="Nicol R."/>
            <person name="O'Leary S.B."/>
            <person name="Ratcliffe A."/>
            <person name="Rounsley S."/>
            <person name="She X."/>
            <person name="Sneddon K.M.B."/>
            <person name="Stewart S."/>
            <person name="Sougnez C."/>
            <person name="Stone S.M."/>
            <person name="Topham K."/>
            <person name="Vincent D."/>
            <person name="Wang S."/>
            <person name="Zimmer A.R."/>
            <person name="Birren B.W."/>
            <person name="Hood L."/>
            <person name="Lander E.S."/>
            <person name="Nusbaum C."/>
        </authorList>
    </citation>
    <scope>NUCLEOTIDE SEQUENCE [LARGE SCALE GENOMIC DNA]</scope>
</reference>
<reference key="5">
    <citation type="submission" date="2005-07" db="EMBL/GenBank/DDBJ databases">
        <authorList>
            <person name="Mural R.J."/>
            <person name="Istrail S."/>
            <person name="Sutton G.G."/>
            <person name="Florea L."/>
            <person name="Halpern A.L."/>
            <person name="Mobarry C.M."/>
            <person name="Lippert R."/>
            <person name="Walenz B."/>
            <person name="Shatkay H."/>
            <person name="Dew I."/>
            <person name="Miller J.R."/>
            <person name="Flanigan M.J."/>
            <person name="Edwards N.J."/>
            <person name="Bolanos R."/>
            <person name="Fasulo D."/>
            <person name="Halldorsson B.V."/>
            <person name="Hannenhalli S."/>
            <person name="Turner R."/>
            <person name="Yooseph S."/>
            <person name="Lu F."/>
            <person name="Nusskern D.R."/>
            <person name="Shue B.C."/>
            <person name="Zheng X.H."/>
            <person name="Zhong F."/>
            <person name="Delcher A.L."/>
            <person name="Huson D.H."/>
            <person name="Kravitz S.A."/>
            <person name="Mouchard L."/>
            <person name="Reinert K."/>
            <person name="Remington K.A."/>
            <person name="Clark A.G."/>
            <person name="Waterman M.S."/>
            <person name="Eichler E.E."/>
            <person name="Adams M.D."/>
            <person name="Hunkapiller M.W."/>
            <person name="Myers E.W."/>
            <person name="Venter J.C."/>
        </authorList>
    </citation>
    <scope>NUCLEOTIDE SEQUENCE [LARGE SCALE GENOMIC DNA]</scope>
</reference>
<reference key="6">
    <citation type="journal article" date="2004" name="Genome Res.">
        <title>The status, quality, and expansion of the NIH full-length cDNA project: the Mammalian Gene Collection (MGC).</title>
        <authorList>
            <consortium name="The MGC Project Team"/>
        </authorList>
    </citation>
    <scope>NUCLEOTIDE SEQUENCE [LARGE SCALE MRNA] (ISOFORM 2)</scope>
    <source>
        <tissue>Brain</tissue>
    </source>
</reference>
<reference key="7">
    <citation type="journal article" date="2006" name="Cell">
        <title>Global, in vivo, and site-specific phosphorylation dynamics in signaling networks.</title>
        <authorList>
            <person name="Olsen J.V."/>
            <person name="Blagoev B."/>
            <person name="Gnad F."/>
            <person name="Macek B."/>
            <person name="Kumar C."/>
            <person name="Mortensen P."/>
            <person name="Mann M."/>
        </authorList>
    </citation>
    <scope>IDENTIFICATION BY MASS SPECTROMETRY [LARGE SCALE ANALYSIS]</scope>
    <source>
        <tissue>Cervix carcinoma</tissue>
    </source>
</reference>
<reference key="8">
    <citation type="journal article" date="2008" name="FEBS Lett.">
        <title>Transmembrane protein 85 from both human (TMEM85) and yeast (YGL231c) inhibit hydrogen peroxide mediated cell death in yeast.</title>
        <authorList>
            <person name="Ring G."/>
            <person name="Khoury C.M."/>
            <person name="Solar A.J."/>
            <person name="Yang Z."/>
            <person name="Mandato C.A."/>
            <person name="Greenwood M.T."/>
        </authorList>
    </citation>
    <scope>FUNCTION</scope>
    <scope>TISSUE SPECIFICITY</scope>
    <scope>ALTERNATIVE SPLICING</scope>
</reference>
<reference key="9">
    <citation type="journal article" date="2008" name="Proc. Natl. Acad. Sci. U.S.A.">
        <title>A quantitative atlas of mitotic phosphorylation.</title>
        <authorList>
            <person name="Dephoure N."/>
            <person name="Zhou C."/>
            <person name="Villen J."/>
            <person name="Beausoleil S.A."/>
            <person name="Bakalarski C.E."/>
            <person name="Elledge S.J."/>
            <person name="Gygi S.P."/>
        </authorList>
    </citation>
    <scope>IDENTIFICATION BY MASS SPECTROMETRY [LARGE SCALE ANALYSIS]</scope>
    <source>
        <tissue>Cervix carcinoma</tissue>
    </source>
</reference>
<reference key="10">
    <citation type="journal article" date="2011" name="BMC Syst. Biol.">
        <title>Initial characterization of the human central proteome.</title>
        <authorList>
            <person name="Burkard T.R."/>
            <person name="Planyavsky M."/>
            <person name="Kaupe I."/>
            <person name="Breitwieser F.P."/>
            <person name="Buerckstuemmer T."/>
            <person name="Bennett K.L."/>
            <person name="Superti-Furga G."/>
            <person name="Colinge J."/>
        </authorList>
    </citation>
    <scope>IDENTIFICATION BY MASS SPECTROMETRY [LARGE SCALE ANALYSIS]</scope>
</reference>
<reference key="11">
    <citation type="journal article" date="2012" name="Mol. Cell. Proteomics">
        <title>Comparative large-scale characterisation of plant vs. mammal proteins reveals similar and idiosyncratic N-alpha acetylation features.</title>
        <authorList>
            <person name="Bienvenut W.V."/>
            <person name="Sumpton D."/>
            <person name="Martinez A."/>
            <person name="Lilla S."/>
            <person name="Espagne C."/>
            <person name="Meinnel T."/>
            <person name="Giglione C."/>
        </authorList>
    </citation>
    <scope>ACETYLATION [LARGE SCALE ANALYSIS] AT THR-2</scope>
    <scope>CLEAVAGE OF INITIATOR METHIONINE [LARGE SCALE ANALYSIS]</scope>
    <scope>IDENTIFICATION BY MASS SPECTROMETRY [LARGE SCALE ANALYSIS]</scope>
</reference>
<reference key="12">
    <citation type="journal article" date="2012" name="Nat. Cell Biol.">
        <title>Defining human ERAD networks through an integrative mapping strategy.</title>
        <authorList>
            <person name="Christianson J.C."/>
            <person name="Olzmann J.A."/>
            <person name="Shaler T.A."/>
            <person name="Sowa M.E."/>
            <person name="Bennett E.J."/>
            <person name="Richter C.M."/>
            <person name="Tyler R.E."/>
            <person name="Greenblatt E.J."/>
            <person name="Harper J.W."/>
            <person name="Kopito R.R."/>
        </authorList>
    </citation>
    <scope>IDENTIFICATION IN THE EMC COMPLEX</scope>
    <scope>SUBCELLULAR LOCATION</scope>
</reference>
<reference key="13">
    <citation type="journal article" date="2012" name="Proc. Natl. Acad. Sci. U.S.A.">
        <title>N-terminal acetylome analyses and functional insights of the N-terminal acetyltransferase NatB.</title>
        <authorList>
            <person name="Van Damme P."/>
            <person name="Lasa M."/>
            <person name="Polevoda B."/>
            <person name="Gazquez C."/>
            <person name="Elosegui-Artola A."/>
            <person name="Kim D.S."/>
            <person name="De Juan-Pardo E."/>
            <person name="Demeyer K."/>
            <person name="Hole K."/>
            <person name="Larrea E."/>
            <person name="Timmerman E."/>
            <person name="Prieto J."/>
            <person name="Arnesen T."/>
            <person name="Sherman F."/>
            <person name="Gevaert K."/>
            <person name="Aldabe R."/>
        </authorList>
    </citation>
    <scope>ACETYLATION [LARGE SCALE ANALYSIS] AT THR-2</scope>
    <scope>CLEAVAGE OF INITIATOR METHIONINE [LARGE SCALE ANALYSIS]</scope>
    <scope>IDENTIFICATION BY MASS SPECTROMETRY [LARGE SCALE ANALYSIS]</scope>
</reference>
<reference key="14">
    <citation type="journal article" date="2013" name="J. Proteome Res.">
        <title>Toward a comprehensive characterization of a human cancer cell phosphoproteome.</title>
        <authorList>
            <person name="Zhou H."/>
            <person name="Di Palma S."/>
            <person name="Preisinger C."/>
            <person name="Peng M."/>
            <person name="Polat A.N."/>
            <person name="Heck A.J."/>
            <person name="Mohammed S."/>
        </authorList>
    </citation>
    <scope>PHOSPHORYLATION [LARGE SCALE ANALYSIS] AT SER-36</scope>
    <scope>IDENTIFICATION BY MASS SPECTROMETRY [LARGE SCALE ANALYSIS]</scope>
    <source>
        <tissue>Cervix carcinoma</tissue>
        <tissue>Erythroleukemia</tissue>
    </source>
</reference>
<reference key="15">
    <citation type="journal article" date="2014" name="J. Proteomics">
        <title>An enzyme assisted RP-RPLC approach for in-depth analysis of human liver phosphoproteome.</title>
        <authorList>
            <person name="Bian Y."/>
            <person name="Song C."/>
            <person name="Cheng K."/>
            <person name="Dong M."/>
            <person name="Wang F."/>
            <person name="Huang J."/>
            <person name="Sun D."/>
            <person name="Wang L."/>
            <person name="Ye M."/>
            <person name="Zou H."/>
        </authorList>
    </citation>
    <scope>PHOSPHORYLATION [LARGE SCALE ANALYSIS] AT SER-36</scope>
    <scope>IDENTIFICATION BY MASS SPECTROMETRY [LARGE SCALE ANALYSIS]</scope>
    <source>
        <tissue>Liver</tissue>
    </source>
</reference>
<reference key="16">
    <citation type="journal article" date="2015" name="Hum. Mol. Genet.">
        <title>Biochemical and cellular analysis of Ogden syndrome reveals downstream Nt-acetylation defects.</title>
        <authorList>
            <person name="Myklebust L.M."/>
            <person name="Van Damme P."/>
            <person name="Stoeve S.I."/>
            <person name="Doerfel M.J."/>
            <person name="Abboud A."/>
            <person name="Kalvik T.V."/>
            <person name="Grauffel C."/>
            <person name="Jonckheere V."/>
            <person name="Wu Y."/>
            <person name="Swensen J."/>
            <person name="Kaasa H."/>
            <person name="Liszczak G."/>
            <person name="Marmorstein R."/>
            <person name="Reuter N."/>
            <person name="Lyon G.J."/>
            <person name="Gevaert K."/>
            <person name="Arnesen T."/>
        </authorList>
    </citation>
    <scope>ACETYLATION AT THR-2</scope>
    <scope>CLEAVAGE OF INITIATOR METHIONINE</scope>
</reference>
<reference key="17">
    <citation type="journal article" date="2015" name="Proteomics">
        <title>N-terminome analysis of the human mitochondrial proteome.</title>
        <authorList>
            <person name="Vaca Jacome A.S."/>
            <person name="Rabilloud T."/>
            <person name="Schaeffer-Reiss C."/>
            <person name="Rompais M."/>
            <person name="Ayoub D."/>
            <person name="Lane L."/>
            <person name="Bairoch A."/>
            <person name="Van Dorsselaer A."/>
            <person name="Carapito C."/>
        </authorList>
    </citation>
    <scope>ACETYLATION [LARGE SCALE ANALYSIS] AT THR-2</scope>
    <scope>CLEAVAGE OF INITIATOR METHIONINE [LARGE SCALE ANALYSIS]</scope>
    <scope>IDENTIFICATION BY MASS SPECTROMETRY [LARGE SCALE ANALYSIS]</scope>
</reference>
<reference key="18">
    <citation type="journal article" date="2018" name="Cell">
        <title>EMC Is Required to Initiate Accurate Membrane Protein Topogenesis.</title>
        <authorList>
            <person name="Chitwood P.J."/>
            <person name="Juszkiewicz S."/>
            <person name="Guna A."/>
            <person name="Shao S."/>
            <person name="Hegde R.S."/>
        </authorList>
    </citation>
    <scope>FUNCTION</scope>
</reference>
<reference key="19">
    <citation type="journal article" date="2018" name="Elife">
        <title>The ER membrane protein complex interacts cotranslationally to enable biogenesis of multipass membrane proteins.</title>
        <authorList>
            <person name="Shurtleff M.J."/>
            <person name="Itzhak D.N."/>
            <person name="Hussmann J.A."/>
            <person name="Schirle Oakdale N.T."/>
            <person name="Costa E.A."/>
            <person name="Jonikas M."/>
            <person name="Weibezahn J."/>
            <person name="Popova K.D."/>
            <person name="Jan C.H."/>
            <person name="Sinitcyn P."/>
            <person name="Vembar S.S."/>
            <person name="Hernandez H."/>
            <person name="Cox J."/>
            <person name="Burlingame A.L."/>
            <person name="Brodsky J.L."/>
            <person name="Frost A."/>
            <person name="Borner G.H."/>
            <person name="Weissman J.S."/>
        </authorList>
    </citation>
    <scope>FUNCTION</scope>
</reference>
<reference key="20">
    <citation type="journal article" date="2018" name="Science">
        <title>The ER membrane protein complex is a transmembrane domain insertase.</title>
        <authorList>
            <person name="Guna A."/>
            <person name="Volkmar N."/>
            <person name="Christianson J.C."/>
            <person name="Hegde R.S."/>
        </authorList>
    </citation>
    <scope>FUNCTION</scope>
    <scope>SUBUNIT</scope>
</reference>
<reference evidence="16" key="21">
    <citation type="journal article" date="2020" name="Elife">
        <title>The architecture of EMC reveals a path for membrane protein insertion.</title>
        <authorList>
            <person name="O'Donnell J.P."/>
            <person name="Phillips B.P."/>
            <person name="Yagita Y."/>
            <person name="Juszkiewicz S."/>
            <person name="Wagner A."/>
            <person name="Malinverni D."/>
            <person name="Keenan R.J."/>
            <person name="Miller E.A."/>
            <person name="Hegde R.S."/>
        </authorList>
    </citation>
    <scope>STRUCTURE BY ELECTRON MICROSCOPY (6.40 ANGSTROMS) OF THE EMC COMPLEX</scope>
    <scope>FUNCTION</scope>
    <scope>TOPOLOGY</scope>
</reference>
<reference key="22">
    <citation type="journal article" date="2020" name="Science">
        <title>Structural basis for membrane insertion by the human ER membrane protein complex.</title>
        <authorList>
            <person name="Pleiner T."/>
            <person name="Tomaleri G.P."/>
            <person name="Januszyk K."/>
            <person name="Inglis A.J."/>
            <person name="Hazu M."/>
            <person name="Voorhees R.M."/>
        </authorList>
    </citation>
    <scope>FUNCTION</scope>
    <scope>TOPOLOGY</scope>
</reference>
<evidence type="ECO:0000256" key="1">
    <source>
        <dbReference type="SAM" id="MobiDB-lite"/>
    </source>
</evidence>
<evidence type="ECO:0000269" key="2">
    <source>
    </source>
</evidence>
<evidence type="ECO:0000269" key="3">
    <source>
    </source>
</evidence>
<evidence type="ECO:0000269" key="4">
    <source>
    </source>
</evidence>
<evidence type="ECO:0000269" key="5">
    <source>
    </source>
</evidence>
<evidence type="ECO:0000269" key="6">
    <source>
    </source>
</evidence>
<evidence type="ECO:0000269" key="7">
    <source>
    </source>
</evidence>
<evidence type="ECO:0000269" key="8">
    <source>
    </source>
</evidence>
<evidence type="ECO:0000269" key="9">
    <source>
    </source>
</evidence>
<evidence type="ECO:0000303" key="10">
    <source>
    </source>
</evidence>
<evidence type="ECO:0000303" key="11">
    <source>
    </source>
</evidence>
<evidence type="ECO:0000305" key="12"/>
<evidence type="ECO:0000305" key="13">
    <source>
    </source>
</evidence>
<evidence type="ECO:0000305" key="14">
    <source>
    </source>
</evidence>
<evidence type="ECO:0000305" key="15">
    <source>
    </source>
</evidence>
<evidence type="ECO:0007744" key="16">
    <source>
        <dbReference type="PDB" id="6Z3W"/>
    </source>
</evidence>
<evidence type="ECO:0007744" key="17">
    <source>
    </source>
</evidence>
<evidence type="ECO:0007744" key="18">
    <source>
    </source>
</evidence>
<evidence type="ECO:0007744" key="19">
    <source>
    </source>
</evidence>
<evidence type="ECO:0007744" key="20">
    <source>
    </source>
</evidence>
<evidence type="ECO:0007744" key="21">
    <source>
    </source>
</evidence>
<evidence type="ECO:0007829" key="22">
    <source>
        <dbReference type="PDB" id="8J0N"/>
    </source>
</evidence>
<evidence type="ECO:0007829" key="23">
    <source>
        <dbReference type="PDB" id="8J0O"/>
    </source>
</evidence>
<name>EMC4_HUMAN</name>
<feature type="initiator methionine" description="Removed" evidence="4 17 18 21">
    <location>
        <position position="1"/>
    </location>
</feature>
<feature type="chain" id="PRO_0000251914" description="ER membrane protein complex subunit 4">
    <location>
        <begin position="2"/>
        <end position="183"/>
    </location>
</feature>
<feature type="topological domain" description="Cytoplasmic" evidence="15">
    <location>
        <begin position="2"/>
        <end position="66"/>
    </location>
</feature>
<feature type="transmembrane region" description="Helical" evidence="15">
    <location>
        <begin position="67"/>
        <end position="87"/>
    </location>
</feature>
<feature type="topological domain" description="Lumenal" evidence="15">
    <location>
        <begin position="88"/>
        <end position="98"/>
    </location>
</feature>
<feature type="transmembrane region" description="Helical" evidence="15">
    <location>
        <begin position="99"/>
        <end position="120"/>
    </location>
</feature>
<feature type="topological domain" description="Cytoplasmic" evidence="15">
    <location>
        <begin position="121"/>
        <end position="127"/>
    </location>
</feature>
<feature type="transmembrane region" description="Helical" evidence="15">
    <location>
        <begin position="128"/>
        <end position="148"/>
    </location>
</feature>
<feature type="topological domain" description="Lumenal" evidence="15">
    <location>
        <begin position="149"/>
        <end position="183"/>
    </location>
</feature>
<feature type="region of interest" description="Disordered" evidence="1">
    <location>
        <begin position="20"/>
        <end position="39"/>
    </location>
</feature>
<feature type="modified residue" description="N-acetylthreonine" evidence="4 17 18 21">
    <location>
        <position position="2"/>
    </location>
</feature>
<feature type="modified residue" description="Phosphoserine" evidence="19 20">
    <location>
        <position position="36"/>
    </location>
</feature>
<feature type="splice variant" id="VSP_037374" description="In isoform 3." evidence="10">
    <original>RCWDIALGPLKQIPMNLFIMYMAGNTISIFPTMMVCMMAWRPIQALMAISATFKMLESSSQKFLQGLVY</original>
    <variation>VQRYRCYRSPWASPELHTHPLLLGGVNVDSSYPEDLETKLLEAGISVFYISATKVLNNLKNRRCLEHKV</variation>
    <location>
        <begin position="68"/>
        <end position="136"/>
    </location>
</feature>
<feature type="splice variant" id="VSP_020798" description="In isoform 2." evidence="10 11">
    <original>TFKMLESSSQKFLQGLVYLIGNLMGLALAVY</original>
    <variation>KNGVQWWRTAFVNMRKQRLVPMYLGLIYILL</variation>
    <location>
        <begin position="119"/>
        <end position="149"/>
    </location>
</feature>
<feature type="splice variant" id="VSP_037375" description="In isoform 3." evidence="10">
    <location>
        <begin position="137"/>
        <end position="183"/>
    </location>
</feature>
<feature type="splice variant" id="VSP_020799" description="In isoform 2." evidence="10 11">
    <location>
        <begin position="150"/>
        <end position="183"/>
    </location>
</feature>
<feature type="sequence variant" id="VAR_053775" description="In dbSNP:rs11544437.">
    <original>P</original>
    <variation>T</variation>
    <location>
        <position position="98"/>
    </location>
</feature>
<feature type="sequence conflict" description="In Ref. 1; AAR24622." evidence="12" ref="1">
    <original>Y</original>
    <variation>H</variation>
    <location>
        <position position="47"/>
    </location>
</feature>
<feature type="sequence conflict" description="In Ref. 1; AAR24622." evidence="12" ref="1">
    <original>K</original>
    <variation>R</variation>
    <location>
        <position position="129"/>
    </location>
</feature>
<feature type="turn" evidence="23">
    <location>
        <begin position="13"/>
        <end position="15"/>
    </location>
</feature>
<feature type="strand" evidence="22">
    <location>
        <begin position="44"/>
        <end position="46"/>
    </location>
</feature>
<feature type="helix" evidence="23">
    <location>
        <begin position="62"/>
        <end position="72"/>
    </location>
</feature>
<feature type="helix" evidence="23">
    <location>
        <begin position="75"/>
        <end position="90"/>
    </location>
</feature>
<feature type="helix" evidence="23">
    <location>
        <begin position="96"/>
        <end position="113"/>
    </location>
</feature>
<feature type="helix" evidence="23">
    <location>
        <begin position="116"/>
        <end position="123"/>
    </location>
</feature>
<feature type="helix" evidence="23">
    <location>
        <begin position="127"/>
        <end position="154"/>
    </location>
</feature>
<feature type="helix" evidence="23">
    <location>
        <begin position="161"/>
        <end position="165"/>
    </location>
</feature>
<feature type="strand" evidence="23">
    <location>
        <begin position="177"/>
        <end position="181"/>
    </location>
</feature>
<keyword id="KW-0002">3D-structure</keyword>
<keyword id="KW-0007">Acetylation</keyword>
<keyword id="KW-0025">Alternative splicing</keyword>
<keyword id="KW-0053">Apoptosis</keyword>
<keyword id="KW-0256">Endoplasmic reticulum</keyword>
<keyword id="KW-0472">Membrane</keyword>
<keyword id="KW-0597">Phosphoprotein</keyword>
<keyword id="KW-1267">Proteomics identification</keyword>
<keyword id="KW-1185">Reference proteome</keyword>
<keyword id="KW-0812">Transmembrane</keyword>
<keyword id="KW-1133">Transmembrane helix</keyword>
<comment type="function">
    <text evidence="5 6 7 8 9 13">Part of the endoplasmic reticulum membrane protein complex (EMC) that enables the energy-independent insertion into endoplasmic reticulum membranes of newly synthesized membrane proteins (PubMed:29242231, PubMed:29809151, PubMed:30415835, PubMed:32439656, PubMed:32459176). Preferentially accommodates proteins with transmembrane domains that are weakly hydrophobic or contain destabilizing features such as charged and aromatic residues (PubMed:29242231, PubMed:29809151, PubMed:30415835). Involved in the cotranslational insertion of multi-pass membrane proteins in which stop-transfer membrane-anchor sequences become ER membrane spanning helices (PubMed:29809151, PubMed:30415835). It is also required for the post-translational insertion of tail-anchored/TA proteins in endoplasmic reticulum membranes (PubMed:29242231, PubMed:29809151). By mediating the proper cotranslational insertion of N-terminal transmembrane domains in an N-exo topology, with translocated N-terminus in the lumen of the ER, controls the topology of multi-pass membrane proteins like the G protein-coupled receptors (PubMed:30415835). By regulating the insertion of various proteins in membranes, it is indirectly involved in many cellular processes (Probable).</text>
</comment>
<comment type="subunit">
    <text evidence="3 5 9">Component of the ER membrane protein complex (EMC).</text>
</comment>
<comment type="interaction">
    <interactant intactId="EBI-2814031">
        <id>Q5J8M3</id>
    </interactant>
    <interactant intactId="EBI-25396304">
        <id>Q9NRM0-1</id>
        <label>SLC2A9</label>
    </interactant>
    <organismsDiffer>false</organismsDiffer>
    <experiments>3</experiments>
</comment>
<comment type="interaction">
    <interactant intactId="EBI-2814031">
        <id>Q5J8M3</id>
    </interactant>
    <interactant intactId="EBI-25396386">
        <id>Q9NRM0-2</id>
        <label>SLC2A9</label>
    </interactant>
    <organismsDiffer>false</organismsDiffer>
    <experiments>2</experiments>
</comment>
<comment type="interaction">
    <interactant intactId="EBI-2814031">
        <id>Q5J8M3</id>
    </interactant>
    <interactant intactId="EBI-25475868">
        <id>PRO_0000449624</id>
        <label>rep</label>
        <dbReference type="UniProtKB" id="P0DTD1"/>
    </interactant>
    <organismsDiffer>true</organismsDiffer>
    <experiments>3</experiments>
</comment>
<comment type="subcellular location">
    <subcellularLocation>
        <location evidence="3">Endoplasmic reticulum membrane</location>
        <topology evidence="14 15">Multi-pass membrane protein</topology>
    </subcellularLocation>
    <text evidence="14 15">Could also be a single-pass transmembrane protein with cytosolic N-terminus and lumenal C-terminus.</text>
</comment>
<comment type="alternative products">
    <event type="alternative splicing"/>
    <isoform>
        <id>Q5J8M3-1</id>
        <name>1</name>
        <name>TMEM85v1</name>
        <sequence type="displayed"/>
    </isoform>
    <isoform>
        <id>Q5J8M3-2</id>
        <name>2</name>
        <name>TMEM85v2</name>
        <sequence type="described" ref="VSP_020798 VSP_020799"/>
    </isoform>
    <isoform>
        <id>Q5J8M3-3</id>
        <name>3</name>
        <sequence type="described" ref="VSP_037374 VSP_037375"/>
    </isoform>
</comment>
<comment type="tissue specificity">
    <text evidence="2">Isoform 1 is expressed in brain and heart. Isoform 2 is expressed in heart.</text>
</comment>
<comment type="similarity">
    <text evidence="12">Belongs to the EMC4 family.</text>
</comment>
<organism>
    <name type="scientific">Homo sapiens</name>
    <name type="common">Human</name>
    <dbReference type="NCBI Taxonomy" id="9606"/>
    <lineage>
        <taxon>Eukaryota</taxon>
        <taxon>Metazoa</taxon>
        <taxon>Chordata</taxon>
        <taxon>Craniata</taxon>
        <taxon>Vertebrata</taxon>
        <taxon>Euteleostomi</taxon>
        <taxon>Mammalia</taxon>
        <taxon>Eutheria</taxon>
        <taxon>Euarchontoglires</taxon>
        <taxon>Primates</taxon>
        <taxon>Haplorrhini</taxon>
        <taxon>Catarrhini</taxon>
        <taxon>Hominidae</taxon>
        <taxon>Homo</taxon>
    </lineage>
</organism>